<keyword id="KW-0238">DNA-binding</keyword>
<keyword id="KW-0539">Nucleus</keyword>
<keyword id="KW-1185">Reference proteome</keyword>
<keyword id="KW-0804">Transcription</keyword>
<keyword id="KW-0805">Transcription regulation</keyword>
<sequence>MSRISRLGACAEELAIAATTIAAFCKHHSNSGLPGDSIPPDAPQKVLQAKQSVITNSQKLEVLLAEPADFIQRLARENQLLACLQWLGEFQVLACIPIVDSVHYSDVADLACVPVDQLRRIARMTITAGFLQEPKPGYVAHSGLSAPFVKQPVLLDAAMFLSETLAPSALHMSLATKRHGRTHQTDQCAFNTAFNTKASFADSLGRRPRLQRQWPSFSRYAIADDEAGVEDVMTRLDWLSLGEATVVDVCAKTASLATALTSKYPSLRFVVQSEEQCQNHTWSRSLSATKLHNGLSTPPESDTGPAARAAKASERLELQQRALGSPQNVTNAAVYILRLGTASPFTSWHKLRAQATAELSAHADILRKEHGSRLILVTRTLPKPGEVETTVEAMARFRDLTLMQLANVRELETSEVVELLNSVHIEGGCLVLTNELRTRNSGMIAFEATYQPQLLG</sequence>
<proteinExistence type="evidence at transcript level"/>
<accession>M2YJ20</accession>
<protein>
    <recommendedName>
        <fullName evidence="5">Dothistromin biosynthesis regulatory protein aflJ</fullName>
    </recommendedName>
</protein>
<evidence type="ECO:0000255" key="1">
    <source>
        <dbReference type="PROSITE-ProRule" id="PRU00393"/>
    </source>
</evidence>
<evidence type="ECO:0000256" key="2">
    <source>
        <dbReference type="SAM" id="MobiDB-lite"/>
    </source>
</evidence>
<evidence type="ECO:0000269" key="3">
    <source>
    </source>
</evidence>
<evidence type="ECO:0000269" key="4">
    <source>
    </source>
</evidence>
<evidence type="ECO:0000303" key="5">
    <source>
    </source>
</evidence>
<evidence type="ECO:0000305" key="6"/>
<organism>
    <name type="scientific">Dothistroma septosporum (strain NZE10 / CBS 128990)</name>
    <name type="common">Red band needle blight fungus</name>
    <name type="synonym">Mycosphaerella pini</name>
    <dbReference type="NCBI Taxonomy" id="675120"/>
    <lineage>
        <taxon>Eukaryota</taxon>
        <taxon>Fungi</taxon>
        <taxon>Dikarya</taxon>
        <taxon>Ascomycota</taxon>
        <taxon>Pezizomycotina</taxon>
        <taxon>Dothideomycetes</taxon>
        <taxon>Dothideomycetidae</taxon>
        <taxon>Mycosphaerellales</taxon>
        <taxon>Mycosphaerellaceae</taxon>
        <taxon>Dothistroma</taxon>
    </lineage>
</organism>
<reference key="1">
    <citation type="journal article" date="2012" name="PLoS Genet.">
        <title>The genomes of the fungal plant pathogens Cladosporium fulvum and Dothistroma septosporum reveal adaptation to different hosts and lifestyles but also signatures of common ancestry.</title>
        <authorList>
            <person name="de Wit P.J.G.M."/>
            <person name="van der Burgt A."/>
            <person name="Oekmen B."/>
            <person name="Stergiopoulos I."/>
            <person name="Abd-Elsalam K.A."/>
            <person name="Aerts A.L."/>
            <person name="Bahkali A.H."/>
            <person name="Beenen H.G."/>
            <person name="Chettri P."/>
            <person name="Cox M.P."/>
            <person name="Datema E."/>
            <person name="de Vries R.P."/>
            <person name="Dhillon B."/>
            <person name="Ganley A.R."/>
            <person name="Griffiths S.A."/>
            <person name="Guo Y."/>
            <person name="Hamelin R.C."/>
            <person name="Henrissat B."/>
            <person name="Kabir M.S."/>
            <person name="Jashni M.K."/>
            <person name="Kema G."/>
            <person name="Klaubauf S."/>
            <person name="Lapidus A."/>
            <person name="Levasseur A."/>
            <person name="Lindquist E."/>
            <person name="Mehrabi R."/>
            <person name="Ohm R.A."/>
            <person name="Owen T.J."/>
            <person name="Salamov A."/>
            <person name="Schwelm A."/>
            <person name="Schijlen E."/>
            <person name="Sun H."/>
            <person name="van den Burg H.A."/>
            <person name="van Ham R.C.H.J."/>
            <person name="Zhang S."/>
            <person name="Goodwin S.B."/>
            <person name="Grigoriev I.V."/>
            <person name="Collemare J."/>
            <person name="Bradshaw R.E."/>
        </authorList>
    </citation>
    <scope>NUCLEOTIDE SEQUENCE [LARGE SCALE GENOMIC DNA]</scope>
    <source>
        <strain>NZE10 / CBS 128990</strain>
    </source>
</reference>
<reference key="2">
    <citation type="journal article" date="2012" name="PLoS Pathog.">
        <title>Diverse lifestyles and strategies of plant pathogenesis encoded in the genomes of eighteen Dothideomycetes fungi.</title>
        <authorList>
            <person name="Ohm R.A."/>
            <person name="Feau N."/>
            <person name="Henrissat B."/>
            <person name="Schoch C.L."/>
            <person name="Horwitz B.A."/>
            <person name="Barry K.W."/>
            <person name="Condon B.J."/>
            <person name="Copeland A.C."/>
            <person name="Dhillon B."/>
            <person name="Glaser F."/>
            <person name="Hesse C.N."/>
            <person name="Kosti I."/>
            <person name="LaButti K."/>
            <person name="Lindquist E.A."/>
            <person name="Lucas S."/>
            <person name="Salamov A.A."/>
            <person name="Bradshaw R.E."/>
            <person name="Ciuffetti L."/>
            <person name="Hamelin R.C."/>
            <person name="Kema G.H.J."/>
            <person name="Lawrence C."/>
            <person name="Scott J.A."/>
            <person name="Spatafora J.W."/>
            <person name="Turgeon B.G."/>
            <person name="de Wit P.J.G.M."/>
            <person name="Zhong S."/>
            <person name="Goodwin S.B."/>
            <person name="Grigoriev I.V."/>
        </authorList>
    </citation>
    <scope>NUCLEOTIDE SEQUENCE [LARGE SCALE GENOMIC DNA]</scope>
    <source>
        <strain>NZE10 / CBS 128990</strain>
    </source>
</reference>
<reference key="3">
    <citation type="journal article" date="2013" name="Fungal Genet. Biol.">
        <title>Dothistromin genes at multiple separate loci are regulated by AflR.</title>
        <authorList>
            <person name="Chettri P."/>
            <person name="Ehrlich K.C."/>
            <person name="Cary J.W."/>
            <person name="Collemare J."/>
            <person name="Cox M.P."/>
            <person name="Griffiths S.A."/>
            <person name="Olson M.A."/>
            <person name="de Wit P.J."/>
            <person name="Bradshaw R.E."/>
        </authorList>
    </citation>
    <scope>FUNCTION</scope>
    <scope>DISRUPTION PHENOTYPE</scope>
</reference>
<reference key="4">
    <citation type="journal article" date="2015" name="Fungal Biol.">
        <title>Regulation of the aflatoxin-like toxin dothistromin by AflJ.</title>
        <authorList>
            <person name="Chettri P."/>
            <person name="Ehrlich K.C."/>
            <person name="Bradshaw R.E."/>
        </authorList>
    </citation>
    <scope>FUNCTION</scope>
    <scope>DISRUPTION PHENOTYPE</scope>
</reference>
<comment type="function">
    <text evidence="4">Transcription coactivator involved in regulation of the dothistromin biosynthesis gene cluster with aflR (PubMed:25986547).</text>
</comment>
<comment type="subcellular location">
    <subcellularLocation>
        <location evidence="6">Nucleus</location>
    </subcellularLocation>
</comment>
<comment type="induction">
    <text evidence="3">Expression is 8-fold up regulated when aflR is deleted (PubMed:23207690).</text>
</comment>
<comment type="disruption phenotype">
    <text evidence="4">Strongly reduces the expression of dothistromin biosynthesis genes such as hexA, hexB, pksA, adhA, vbsA, dotB, ver1 and dotB, and the subsequent production of dothistromin (PubMed:25986547).</text>
</comment>
<dbReference type="EMBL" id="KB446546">
    <property type="protein sequence ID" value="EME38896.1"/>
    <property type="molecule type" value="Genomic_DNA"/>
</dbReference>
<dbReference type="SMR" id="M2YJ20"/>
<dbReference type="STRING" id="675120.M2YJ20"/>
<dbReference type="EnsemblFungi" id="EME38896">
    <property type="protein sequence ID" value="EME38896"/>
    <property type="gene ID" value="DOTSEDRAFT_57214"/>
</dbReference>
<dbReference type="eggNOG" id="KOG3178">
    <property type="taxonomic scope" value="Eukaryota"/>
</dbReference>
<dbReference type="HOGENOM" id="CLU_005533_11_0_1"/>
<dbReference type="OMA" id="LLACIQW"/>
<dbReference type="OrthoDB" id="2410195at2759"/>
<dbReference type="Proteomes" id="UP000016933">
    <property type="component" value="Unassembled WGS sequence"/>
</dbReference>
<dbReference type="GO" id="GO:0005634">
    <property type="term" value="C:nucleus"/>
    <property type="evidence" value="ECO:0007669"/>
    <property type="project" value="UniProtKB-SubCell"/>
</dbReference>
<dbReference type="GO" id="GO:0003677">
    <property type="term" value="F:DNA binding"/>
    <property type="evidence" value="ECO:0007669"/>
    <property type="project" value="UniProtKB-KW"/>
</dbReference>
<dbReference type="Gene3D" id="3.40.50.150">
    <property type="entry name" value="Vaccinia Virus protein VP39"/>
    <property type="match status" value="1"/>
</dbReference>
<dbReference type="InterPro" id="IPR029063">
    <property type="entry name" value="SAM-dependent_MTases_sf"/>
</dbReference>
<dbReference type="InterPro" id="IPR036390">
    <property type="entry name" value="WH_DNA-bd_sf"/>
</dbReference>
<dbReference type="PANTHER" id="PTHR43712:SF15">
    <property type="entry name" value="MONODICTYPHENONE CLUSTER TRANSCRIPTIONAL COACTIVATOR MDPA"/>
    <property type="match status" value="1"/>
</dbReference>
<dbReference type="PANTHER" id="PTHR43712">
    <property type="entry name" value="PUTATIVE (AFU_ORTHOLOGUE AFUA_4G14580)-RELATED"/>
    <property type="match status" value="1"/>
</dbReference>
<dbReference type="SUPFAM" id="SSF46785">
    <property type="entry name" value="Winged helix' DNA-binding domain"/>
    <property type="match status" value="1"/>
</dbReference>
<gene>
    <name evidence="5" type="primary">aflJ</name>
    <name type="ORF">DOTSEDRAFT_57214</name>
</gene>
<name>AFLJ_DOTSN</name>
<feature type="chain" id="PRO_0000443471" description="Dothistromin biosynthesis regulatory protein aflJ">
    <location>
        <begin position="1"/>
        <end position="456"/>
    </location>
</feature>
<feature type="domain" description="HTH iclR-type" evidence="1">
    <location>
        <begin position="74"/>
        <end position="143"/>
    </location>
</feature>
<feature type="DNA-binding region" description="H-T-H motif" evidence="1">
    <location>
        <begin position="104"/>
        <end position="123"/>
    </location>
</feature>
<feature type="region of interest" description="Disordered" evidence="2">
    <location>
        <begin position="290"/>
        <end position="314"/>
    </location>
</feature>
<feature type="compositionally biased region" description="Polar residues" evidence="2">
    <location>
        <begin position="290"/>
        <end position="300"/>
    </location>
</feature>